<evidence type="ECO:0000250" key="1"/>
<evidence type="ECO:0000255" key="2">
    <source>
        <dbReference type="PROSITE-ProRule" id="PRU00541"/>
    </source>
</evidence>
<evidence type="ECO:0000255" key="3">
    <source>
        <dbReference type="PROSITE-ProRule" id="PRU00542"/>
    </source>
</evidence>
<evidence type="ECO:0000256" key="4">
    <source>
        <dbReference type="SAM" id="MobiDB-lite"/>
    </source>
</evidence>
<evidence type="ECO:0000305" key="5"/>
<keyword id="KW-0067">ATP-binding</keyword>
<keyword id="KW-0347">Helicase</keyword>
<keyword id="KW-0378">Hydrolase</keyword>
<keyword id="KW-0547">Nucleotide-binding</keyword>
<keyword id="KW-0539">Nucleus</keyword>
<keyword id="KW-1185">Reference proteome</keyword>
<keyword id="KW-0690">Ribosome biogenesis</keyword>
<keyword id="KW-0694">RNA-binding</keyword>
<keyword id="KW-0698">rRNA processing</keyword>
<reference key="1">
    <citation type="journal article" date="2002" name="Nature">
        <title>The genome sequence of Schizosaccharomyces pombe.</title>
        <authorList>
            <person name="Wood V."/>
            <person name="Gwilliam R."/>
            <person name="Rajandream M.A."/>
            <person name="Lyne M.H."/>
            <person name="Lyne R."/>
            <person name="Stewart A."/>
            <person name="Sgouros J.G."/>
            <person name="Peat N."/>
            <person name="Hayles J."/>
            <person name="Baker S.G."/>
            <person name="Basham D."/>
            <person name="Bowman S."/>
            <person name="Brooks K."/>
            <person name="Brown D."/>
            <person name="Brown S."/>
            <person name="Chillingworth T."/>
            <person name="Churcher C.M."/>
            <person name="Collins M."/>
            <person name="Connor R."/>
            <person name="Cronin A."/>
            <person name="Davis P."/>
            <person name="Feltwell T."/>
            <person name="Fraser A."/>
            <person name="Gentles S."/>
            <person name="Goble A."/>
            <person name="Hamlin N."/>
            <person name="Harris D.E."/>
            <person name="Hidalgo J."/>
            <person name="Hodgson G."/>
            <person name="Holroyd S."/>
            <person name="Hornsby T."/>
            <person name="Howarth S."/>
            <person name="Huckle E.J."/>
            <person name="Hunt S."/>
            <person name="Jagels K."/>
            <person name="James K.D."/>
            <person name="Jones L."/>
            <person name="Jones M."/>
            <person name="Leather S."/>
            <person name="McDonald S."/>
            <person name="McLean J."/>
            <person name="Mooney P."/>
            <person name="Moule S."/>
            <person name="Mungall K.L."/>
            <person name="Murphy L.D."/>
            <person name="Niblett D."/>
            <person name="Odell C."/>
            <person name="Oliver K."/>
            <person name="O'Neil S."/>
            <person name="Pearson D."/>
            <person name="Quail M.A."/>
            <person name="Rabbinowitsch E."/>
            <person name="Rutherford K.M."/>
            <person name="Rutter S."/>
            <person name="Saunders D."/>
            <person name="Seeger K."/>
            <person name="Sharp S."/>
            <person name="Skelton J."/>
            <person name="Simmonds M.N."/>
            <person name="Squares R."/>
            <person name="Squares S."/>
            <person name="Stevens K."/>
            <person name="Taylor K."/>
            <person name="Taylor R.G."/>
            <person name="Tivey A."/>
            <person name="Walsh S.V."/>
            <person name="Warren T."/>
            <person name="Whitehead S."/>
            <person name="Woodward J.R."/>
            <person name="Volckaert G."/>
            <person name="Aert R."/>
            <person name="Robben J."/>
            <person name="Grymonprez B."/>
            <person name="Weltjens I."/>
            <person name="Vanstreels E."/>
            <person name="Rieger M."/>
            <person name="Schaefer M."/>
            <person name="Mueller-Auer S."/>
            <person name="Gabel C."/>
            <person name="Fuchs M."/>
            <person name="Duesterhoeft A."/>
            <person name="Fritzc C."/>
            <person name="Holzer E."/>
            <person name="Moestl D."/>
            <person name="Hilbert H."/>
            <person name="Borzym K."/>
            <person name="Langer I."/>
            <person name="Beck A."/>
            <person name="Lehrach H."/>
            <person name="Reinhardt R."/>
            <person name="Pohl T.M."/>
            <person name="Eger P."/>
            <person name="Zimmermann W."/>
            <person name="Wedler H."/>
            <person name="Wambutt R."/>
            <person name="Purnelle B."/>
            <person name="Goffeau A."/>
            <person name="Cadieu E."/>
            <person name="Dreano S."/>
            <person name="Gloux S."/>
            <person name="Lelaure V."/>
            <person name="Mottier S."/>
            <person name="Galibert F."/>
            <person name="Aves S.J."/>
            <person name="Xiang Z."/>
            <person name="Hunt C."/>
            <person name="Moore K."/>
            <person name="Hurst S.M."/>
            <person name="Lucas M."/>
            <person name="Rochet M."/>
            <person name="Gaillardin C."/>
            <person name="Tallada V.A."/>
            <person name="Garzon A."/>
            <person name="Thode G."/>
            <person name="Daga R.R."/>
            <person name="Cruzado L."/>
            <person name="Jimenez J."/>
            <person name="Sanchez M."/>
            <person name="del Rey F."/>
            <person name="Benito J."/>
            <person name="Dominguez A."/>
            <person name="Revuelta J.L."/>
            <person name="Moreno S."/>
            <person name="Armstrong J."/>
            <person name="Forsburg S.L."/>
            <person name="Cerutti L."/>
            <person name="Lowe T."/>
            <person name="McCombie W.R."/>
            <person name="Paulsen I."/>
            <person name="Potashkin J."/>
            <person name="Shpakovski G.V."/>
            <person name="Ussery D."/>
            <person name="Barrell B.G."/>
            <person name="Nurse P."/>
        </authorList>
    </citation>
    <scope>NUCLEOTIDE SEQUENCE [LARGE SCALE GENOMIC DNA]</scope>
    <source>
        <strain>972 / ATCC 24843</strain>
    </source>
</reference>
<reference key="2">
    <citation type="journal article" date="1997" name="DNA Res.">
        <title>Identification of open reading frames in Schizosaccharomyces pombe cDNAs.</title>
        <authorList>
            <person name="Yoshioka S."/>
            <person name="Kato K."/>
            <person name="Nakai K."/>
            <person name="Okayama H."/>
            <person name="Nojima H."/>
        </authorList>
    </citation>
    <scope>NUCLEOTIDE SEQUENCE [LARGE SCALE MRNA] OF 115-604</scope>
    <source>
        <strain>PR745</strain>
    </source>
</reference>
<accession>Q76PD3</accession>
<accession>O74491</accession>
<accession>P78908</accession>
<protein>
    <recommendedName>
        <fullName>ATP-dependent RNA helicase dbp6</fullName>
        <ecNumber>3.6.4.13</ecNumber>
    </recommendedName>
</protein>
<organism>
    <name type="scientific">Schizosaccharomyces pombe (strain 972 / ATCC 24843)</name>
    <name type="common">Fission yeast</name>
    <dbReference type="NCBI Taxonomy" id="284812"/>
    <lineage>
        <taxon>Eukaryota</taxon>
        <taxon>Fungi</taxon>
        <taxon>Dikarya</taxon>
        <taxon>Ascomycota</taxon>
        <taxon>Taphrinomycotina</taxon>
        <taxon>Schizosaccharomycetes</taxon>
        <taxon>Schizosaccharomycetales</taxon>
        <taxon>Schizosaccharomycetaceae</taxon>
        <taxon>Schizosaccharomyces</taxon>
    </lineage>
</organism>
<feature type="chain" id="PRO_0000232296" description="ATP-dependent RNA helicase dbp6">
    <location>
        <begin position="1"/>
        <end position="604"/>
    </location>
</feature>
<feature type="domain" description="Helicase ATP-binding" evidence="2">
    <location>
        <begin position="167"/>
        <end position="379"/>
    </location>
</feature>
<feature type="domain" description="Helicase C-terminal" evidence="3">
    <location>
        <begin position="406"/>
        <end position="573"/>
    </location>
</feature>
<feature type="region of interest" description="Disordered" evidence="4">
    <location>
        <begin position="1"/>
        <end position="37"/>
    </location>
</feature>
<feature type="region of interest" description="Disordered" evidence="4">
    <location>
        <begin position="51"/>
        <end position="70"/>
    </location>
</feature>
<feature type="short sequence motif" description="Q motif">
    <location>
        <begin position="149"/>
        <end position="157"/>
    </location>
</feature>
<feature type="short sequence motif" description="DEAD box">
    <location>
        <begin position="292"/>
        <end position="295"/>
    </location>
</feature>
<feature type="compositionally biased region" description="Basic and acidic residues" evidence="4">
    <location>
        <begin position="1"/>
        <end position="16"/>
    </location>
</feature>
<feature type="compositionally biased region" description="Low complexity" evidence="4">
    <location>
        <begin position="51"/>
        <end position="60"/>
    </location>
</feature>
<feature type="binding site" evidence="2">
    <location>
        <begin position="180"/>
        <end position="187"/>
    </location>
    <ligand>
        <name>ATP</name>
        <dbReference type="ChEBI" id="CHEBI:30616"/>
    </ligand>
</feature>
<feature type="sequence conflict" description="In Ref. 2; BAA13920." evidence="5" ref="2">
    <original>V</original>
    <variation>F</variation>
    <location>
        <position position="120"/>
    </location>
</feature>
<feature type="sequence conflict" description="In Ref. 2; BAA13920." evidence="5" ref="2">
    <original>N</original>
    <variation>Y</variation>
    <location>
        <position position="123"/>
    </location>
</feature>
<feature type="sequence conflict" description="In Ref. 2; BAA13920." evidence="5" ref="2">
    <original>F</original>
    <variation>L</variation>
    <location>
        <position position="401"/>
    </location>
</feature>
<feature type="sequence conflict" description="In Ref. 2; BAA13920." evidence="5" ref="2">
    <original>R</original>
    <variation>W</variation>
    <location>
        <position position="482"/>
    </location>
</feature>
<feature type="sequence conflict" description="In Ref. 2; BAA13920." evidence="5" ref="2">
    <original>DVA</original>
    <variation>HFS</variation>
    <location>
        <begin position="502"/>
        <end position="504"/>
    </location>
</feature>
<feature type="sequence conflict" description="In Ref. 2; BAA13920." evidence="5" ref="2">
    <original>L</original>
    <variation>F</variation>
    <location>
        <position position="516"/>
    </location>
</feature>
<feature type="sequence conflict" description="In Ref. 2; BAA13920." evidence="5" ref="2">
    <original>R</original>
    <variation>P</variation>
    <location>
        <position position="527"/>
    </location>
</feature>
<feature type="sequence conflict" description="In Ref. 2; BAA13920." evidence="5" ref="2">
    <original>RR</original>
    <variation>KK</variation>
    <location>
        <begin position="557"/>
        <end position="558"/>
    </location>
</feature>
<feature type="sequence conflict" description="In Ref. 2; BAA13920." evidence="5" ref="2">
    <original>VA</original>
    <variation>FP</variation>
    <location>
        <begin position="578"/>
        <end position="579"/>
    </location>
</feature>
<feature type="sequence conflict" description="In Ref. 2; BAA13920." evidence="5" ref="2">
    <original>V</original>
    <variation>L</variation>
    <location>
        <position position="591"/>
    </location>
</feature>
<feature type="sequence conflict" description="In Ref. 2; BAA13920." evidence="5" ref="2">
    <original>Y</original>
    <variation>C</variation>
    <location>
        <position position="596"/>
    </location>
</feature>
<comment type="function">
    <text evidence="1">ATP-binding RNA helicase involved in the biogenesis of 60S ribosomal subunits and is required for the normal formation of 25S and 5.8S rRNAs.</text>
</comment>
<comment type="catalytic activity">
    <reaction>
        <text>ATP + H2O = ADP + phosphate + H(+)</text>
        <dbReference type="Rhea" id="RHEA:13065"/>
        <dbReference type="ChEBI" id="CHEBI:15377"/>
        <dbReference type="ChEBI" id="CHEBI:15378"/>
        <dbReference type="ChEBI" id="CHEBI:30616"/>
        <dbReference type="ChEBI" id="CHEBI:43474"/>
        <dbReference type="ChEBI" id="CHEBI:456216"/>
        <dbReference type="EC" id="3.6.4.13"/>
    </reaction>
</comment>
<comment type="subunit">
    <text evidence="1">Associated with pre-ribosomal particles.</text>
</comment>
<comment type="subcellular location">
    <subcellularLocation>
        <location evidence="1">Nucleus</location>
        <location evidence="1">Nucleolus</location>
    </subcellularLocation>
</comment>
<comment type="domain">
    <text>The Q motif is unique to and characteristic of the DEAD box family of RNA helicases and controls ATP binding and hydrolysis.</text>
</comment>
<comment type="similarity">
    <text evidence="5">Belongs to the DEAD box helicase family. DDX51/DBP6 subfamily.</text>
</comment>
<name>DBP6_SCHPO</name>
<sequence length="604" mass="68345">MSVEVDKSSHSKPKIEKKSKRNKRKWLNDENKTHVTASEAAIERLKKSASFSQAAQQALKQSRKEDNERDIEMQDVDAEAQPHDLLPIPQPSVEDFVDSKPHVKNITSVLPKWLAEPITVDPNTTVEFSSLNISSKLVERLQKQNITRGFAVQAAVLPLLLQDGRHGPMYSYGGDVCVSAATGSGKTLSYVIPIVQCLSHRTVPRLRCVVIVPTRELTVQVAKTFEYYMSGAGLQVCAWTGQKSLRHETYQLNGDENECRIDVLVSTPGRLVDHIRNDESFSLQHLRYMVIDEADRLLDQSFQDWVDTVMMEISHPKCLQNKSNILDLDQNISPTFLPDIDTLLPYRLPSPLQKLVFSATLTRDPSKIASLKLHNPRLVLVQNKDMEVDDGGEIEDDAIVFSVPPTLQEYHVSVSSEKPILLYHLIHSKNLTNILCFVKSNEAAARLHRLLELIHESLNQSFSCGLFTSSLSRDERKKIISRFATGDLNLLVCSDLMARGIDVANTQNVINYDPPLSVRSYVHRIGRTARAGREGFAWTLVQSHEGHHFSKLVKQLRRTLPIKRIKIEFSHISEEFVVAYDKALEALRVEVFNSRYPQQKSFLT</sequence>
<proteinExistence type="evidence at transcript level"/>
<dbReference type="EC" id="3.6.4.13"/>
<dbReference type="EMBL" id="CU329672">
    <property type="protein sequence ID" value="CAA20842.1"/>
    <property type="molecule type" value="Genomic_DNA"/>
</dbReference>
<dbReference type="EMBL" id="D89259">
    <property type="protein sequence ID" value="BAA13920.1"/>
    <property type="molecule type" value="mRNA"/>
</dbReference>
<dbReference type="PIR" id="T41249">
    <property type="entry name" value="T41249"/>
</dbReference>
<dbReference type="PIR" id="T43184">
    <property type="entry name" value="T43184"/>
</dbReference>
<dbReference type="RefSeq" id="NP_588332.1">
    <property type="nucleotide sequence ID" value="NM_001023323.2"/>
</dbReference>
<dbReference type="SMR" id="Q76PD3"/>
<dbReference type="BioGRID" id="275390">
    <property type="interactions" value="1"/>
</dbReference>
<dbReference type="FunCoup" id="Q76PD3">
    <property type="interactions" value="906"/>
</dbReference>
<dbReference type="STRING" id="284812.Q76PD3"/>
<dbReference type="iPTMnet" id="Q76PD3"/>
<dbReference type="PaxDb" id="4896-SPCC285.03.1"/>
<dbReference type="EnsemblFungi" id="SPCC285.03.1">
    <property type="protein sequence ID" value="SPCC285.03.1:pep"/>
    <property type="gene ID" value="SPCC285.03"/>
</dbReference>
<dbReference type="GeneID" id="2538809"/>
<dbReference type="KEGG" id="spo:2538809"/>
<dbReference type="PomBase" id="SPCC285.03">
    <property type="gene designation" value="dbp6"/>
</dbReference>
<dbReference type="VEuPathDB" id="FungiDB:SPCC285.03"/>
<dbReference type="eggNOG" id="KOG0350">
    <property type="taxonomic scope" value="Eukaryota"/>
</dbReference>
<dbReference type="HOGENOM" id="CLU_003041_15_3_1"/>
<dbReference type="InParanoid" id="Q76PD3"/>
<dbReference type="OMA" id="HEVKAFD"/>
<dbReference type="PhylomeDB" id="Q76PD3"/>
<dbReference type="PRO" id="PR:Q76PD3"/>
<dbReference type="Proteomes" id="UP000002485">
    <property type="component" value="Chromosome III"/>
</dbReference>
<dbReference type="GO" id="GO:0005829">
    <property type="term" value="C:cytosol"/>
    <property type="evidence" value="ECO:0007005"/>
    <property type="project" value="PomBase"/>
</dbReference>
<dbReference type="GO" id="GO:0005730">
    <property type="term" value="C:nucleolus"/>
    <property type="evidence" value="ECO:0000266"/>
    <property type="project" value="PomBase"/>
</dbReference>
<dbReference type="GO" id="GO:0005634">
    <property type="term" value="C:nucleus"/>
    <property type="evidence" value="ECO:0007005"/>
    <property type="project" value="PomBase"/>
</dbReference>
<dbReference type="GO" id="GO:0005524">
    <property type="term" value="F:ATP binding"/>
    <property type="evidence" value="ECO:0007669"/>
    <property type="project" value="UniProtKB-KW"/>
</dbReference>
<dbReference type="GO" id="GO:0016887">
    <property type="term" value="F:ATP hydrolysis activity"/>
    <property type="evidence" value="ECO:0007669"/>
    <property type="project" value="RHEA"/>
</dbReference>
<dbReference type="GO" id="GO:0003723">
    <property type="term" value="F:RNA binding"/>
    <property type="evidence" value="ECO:0007669"/>
    <property type="project" value="UniProtKB-KW"/>
</dbReference>
<dbReference type="GO" id="GO:0003724">
    <property type="term" value="F:RNA helicase activity"/>
    <property type="evidence" value="ECO:0000266"/>
    <property type="project" value="PomBase"/>
</dbReference>
<dbReference type="GO" id="GO:0006364">
    <property type="term" value="P:rRNA processing"/>
    <property type="evidence" value="ECO:0000266"/>
    <property type="project" value="PomBase"/>
</dbReference>
<dbReference type="CDD" id="cd17956">
    <property type="entry name" value="DEADc_DDX51"/>
    <property type="match status" value="1"/>
</dbReference>
<dbReference type="CDD" id="cd18787">
    <property type="entry name" value="SF2_C_DEAD"/>
    <property type="match status" value="1"/>
</dbReference>
<dbReference type="FunFam" id="3.40.50.300:FF:001539">
    <property type="entry name" value="ATP-dependent RNA helicase DDX51"/>
    <property type="match status" value="1"/>
</dbReference>
<dbReference type="Gene3D" id="3.40.50.300">
    <property type="entry name" value="P-loop containing nucleotide triphosphate hydrolases"/>
    <property type="match status" value="2"/>
</dbReference>
<dbReference type="InterPro" id="IPR011545">
    <property type="entry name" value="DEAD/DEAH_box_helicase_dom"/>
</dbReference>
<dbReference type="InterPro" id="IPR014001">
    <property type="entry name" value="Helicase_ATP-bd"/>
</dbReference>
<dbReference type="InterPro" id="IPR001650">
    <property type="entry name" value="Helicase_C-like"/>
</dbReference>
<dbReference type="InterPro" id="IPR027417">
    <property type="entry name" value="P-loop_NTPase"/>
</dbReference>
<dbReference type="InterPro" id="IPR000629">
    <property type="entry name" value="RNA-helicase_DEAD-box_CS"/>
</dbReference>
<dbReference type="PANTHER" id="PTHR24031">
    <property type="entry name" value="RNA HELICASE"/>
    <property type="match status" value="1"/>
</dbReference>
<dbReference type="Pfam" id="PF00270">
    <property type="entry name" value="DEAD"/>
    <property type="match status" value="1"/>
</dbReference>
<dbReference type="Pfam" id="PF00271">
    <property type="entry name" value="Helicase_C"/>
    <property type="match status" value="1"/>
</dbReference>
<dbReference type="SMART" id="SM00487">
    <property type="entry name" value="DEXDc"/>
    <property type="match status" value="1"/>
</dbReference>
<dbReference type="SMART" id="SM00490">
    <property type="entry name" value="HELICc"/>
    <property type="match status" value="1"/>
</dbReference>
<dbReference type="SUPFAM" id="SSF52540">
    <property type="entry name" value="P-loop containing nucleoside triphosphate hydrolases"/>
    <property type="match status" value="1"/>
</dbReference>
<dbReference type="PROSITE" id="PS00039">
    <property type="entry name" value="DEAD_ATP_HELICASE"/>
    <property type="match status" value="1"/>
</dbReference>
<dbReference type="PROSITE" id="PS51192">
    <property type="entry name" value="HELICASE_ATP_BIND_1"/>
    <property type="match status" value="1"/>
</dbReference>
<dbReference type="PROSITE" id="PS51194">
    <property type="entry name" value="HELICASE_CTER"/>
    <property type="match status" value="1"/>
</dbReference>
<dbReference type="PROSITE" id="PS51195">
    <property type="entry name" value="Q_MOTIF"/>
    <property type="match status" value="1"/>
</dbReference>
<gene>
    <name type="primary">dbp6</name>
    <name type="ORF">SPCC285.03</name>
</gene>